<protein>
    <recommendedName>
        <fullName evidence="1">Trigger factor</fullName>
        <shortName evidence="1">TF</shortName>
        <ecNumber evidence="1">5.2.1.8</ecNumber>
    </recommendedName>
    <alternativeName>
        <fullName evidence="1">PPIase</fullName>
    </alternativeName>
</protein>
<gene>
    <name evidence="1" type="primary">tig</name>
    <name type="ordered locus">ECA1147</name>
</gene>
<feature type="chain" id="PRO_0000179353" description="Trigger factor">
    <location>
        <begin position="1"/>
        <end position="434"/>
    </location>
</feature>
<feature type="domain" description="PPIase FKBP-type" evidence="1">
    <location>
        <begin position="161"/>
        <end position="246"/>
    </location>
</feature>
<dbReference type="EC" id="5.2.1.8" evidence="1"/>
<dbReference type="EMBL" id="BX950851">
    <property type="protein sequence ID" value="CAG74057.1"/>
    <property type="molecule type" value="Genomic_DNA"/>
</dbReference>
<dbReference type="RefSeq" id="WP_011092741.1">
    <property type="nucleotide sequence ID" value="NC_004547.2"/>
</dbReference>
<dbReference type="SMR" id="Q6D828"/>
<dbReference type="STRING" id="218491.ECA1147"/>
<dbReference type="KEGG" id="eca:ECA1147"/>
<dbReference type="PATRIC" id="fig|218491.5.peg.1161"/>
<dbReference type="eggNOG" id="COG0544">
    <property type="taxonomic scope" value="Bacteria"/>
</dbReference>
<dbReference type="HOGENOM" id="CLU_033058_2_0_6"/>
<dbReference type="OrthoDB" id="9767721at2"/>
<dbReference type="Proteomes" id="UP000007966">
    <property type="component" value="Chromosome"/>
</dbReference>
<dbReference type="GO" id="GO:0005737">
    <property type="term" value="C:cytoplasm"/>
    <property type="evidence" value="ECO:0007669"/>
    <property type="project" value="UniProtKB-SubCell"/>
</dbReference>
<dbReference type="GO" id="GO:0003755">
    <property type="term" value="F:peptidyl-prolyl cis-trans isomerase activity"/>
    <property type="evidence" value="ECO:0007669"/>
    <property type="project" value="UniProtKB-UniRule"/>
</dbReference>
<dbReference type="GO" id="GO:0044183">
    <property type="term" value="F:protein folding chaperone"/>
    <property type="evidence" value="ECO:0007669"/>
    <property type="project" value="TreeGrafter"/>
</dbReference>
<dbReference type="GO" id="GO:0043022">
    <property type="term" value="F:ribosome binding"/>
    <property type="evidence" value="ECO:0007669"/>
    <property type="project" value="TreeGrafter"/>
</dbReference>
<dbReference type="GO" id="GO:0051083">
    <property type="term" value="P:'de novo' cotranslational protein folding"/>
    <property type="evidence" value="ECO:0007669"/>
    <property type="project" value="TreeGrafter"/>
</dbReference>
<dbReference type="GO" id="GO:0051301">
    <property type="term" value="P:cell division"/>
    <property type="evidence" value="ECO:0007669"/>
    <property type="project" value="UniProtKB-KW"/>
</dbReference>
<dbReference type="GO" id="GO:0061077">
    <property type="term" value="P:chaperone-mediated protein folding"/>
    <property type="evidence" value="ECO:0007669"/>
    <property type="project" value="TreeGrafter"/>
</dbReference>
<dbReference type="GO" id="GO:0015031">
    <property type="term" value="P:protein transport"/>
    <property type="evidence" value="ECO:0007669"/>
    <property type="project" value="UniProtKB-UniRule"/>
</dbReference>
<dbReference type="GO" id="GO:0043335">
    <property type="term" value="P:protein unfolding"/>
    <property type="evidence" value="ECO:0007669"/>
    <property type="project" value="TreeGrafter"/>
</dbReference>
<dbReference type="FunFam" id="3.10.50.40:FF:000001">
    <property type="entry name" value="Trigger factor"/>
    <property type="match status" value="1"/>
</dbReference>
<dbReference type="FunFam" id="3.30.70.1050:FF:000001">
    <property type="entry name" value="Trigger factor"/>
    <property type="match status" value="1"/>
</dbReference>
<dbReference type="Gene3D" id="3.10.50.40">
    <property type="match status" value="1"/>
</dbReference>
<dbReference type="Gene3D" id="3.30.70.1050">
    <property type="entry name" value="Trigger factor ribosome-binding domain"/>
    <property type="match status" value="1"/>
</dbReference>
<dbReference type="Gene3D" id="1.10.3120.10">
    <property type="entry name" value="Trigger factor, C-terminal domain"/>
    <property type="match status" value="1"/>
</dbReference>
<dbReference type="HAMAP" id="MF_00303">
    <property type="entry name" value="Trigger_factor_Tig"/>
    <property type="match status" value="1"/>
</dbReference>
<dbReference type="InterPro" id="IPR046357">
    <property type="entry name" value="PPIase_dom_sf"/>
</dbReference>
<dbReference type="InterPro" id="IPR001179">
    <property type="entry name" value="PPIase_FKBP_dom"/>
</dbReference>
<dbReference type="InterPro" id="IPR005215">
    <property type="entry name" value="Trig_fac"/>
</dbReference>
<dbReference type="InterPro" id="IPR008880">
    <property type="entry name" value="Trigger_fac_C"/>
</dbReference>
<dbReference type="InterPro" id="IPR037041">
    <property type="entry name" value="Trigger_fac_C_sf"/>
</dbReference>
<dbReference type="InterPro" id="IPR008881">
    <property type="entry name" value="Trigger_fac_ribosome-bd_bac"/>
</dbReference>
<dbReference type="InterPro" id="IPR036611">
    <property type="entry name" value="Trigger_fac_ribosome-bd_sf"/>
</dbReference>
<dbReference type="InterPro" id="IPR027304">
    <property type="entry name" value="Trigger_fact/SurA_dom_sf"/>
</dbReference>
<dbReference type="NCBIfam" id="TIGR00115">
    <property type="entry name" value="tig"/>
    <property type="match status" value="1"/>
</dbReference>
<dbReference type="PANTHER" id="PTHR30560">
    <property type="entry name" value="TRIGGER FACTOR CHAPERONE AND PEPTIDYL-PROLYL CIS/TRANS ISOMERASE"/>
    <property type="match status" value="1"/>
</dbReference>
<dbReference type="PANTHER" id="PTHR30560:SF3">
    <property type="entry name" value="TRIGGER FACTOR-LIKE PROTEIN TIG, CHLOROPLASTIC"/>
    <property type="match status" value="1"/>
</dbReference>
<dbReference type="Pfam" id="PF00254">
    <property type="entry name" value="FKBP_C"/>
    <property type="match status" value="1"/>
</dbReference>
<dbReference type="Pfam" id="PF05698">
    <property type="entry name" value="Trigger_C"/>
    <property type="match status" value="1"/>
</dbReference>
<dbReference type="Pfam" id="PF05697">
    <property type="entry name" value="Trigger_N"/>
    <property type="match status" value="1"/>
</dbReference>
<dbReference type="PIRSF" id="PIRSF003095">
    <property type="entry name" value="Trigger_factor"/>
    <property type="match status" value="1"/>
</dbReference>
<dbReference type="SUPFAM" id="SSF54534">
    <property type="entry name" value="FKBP-like"/>
    <property type="match status" value="1"/>
</dbReference>
<dbReference type="SUPFAM" id="SSF109998">
    <property type="entry name" value="Triger factor/SurA peptide-binding domain-like"/>
    <property type="match status" value="1"/>
</dbReference>
<dbReference type="SUPFAM" id="SSF102735">
    <property type="entry name" value="Trigger factor ribosome-binding domain"/>
    <property type="match status" value="1"/>
</dbReference>
<dbReference type="PROSITE" id="PS50059">
    <property type="entry name" value="FKBP_PPIASE"/>
    <property type="match status" value="1"/>
</dbReference>
<evidence type="ECO:0000255" key="1">
    <source>
        <dbReference type="HAMAP-Rule" id="MF_00303"/>
    </source>
</evidence>
<accession>Q6D828</accession>
<keyword id="KW-0131">Cell cycle</keyword>
<keyword id="KW-0132">Cell division</keyword>
<keyword id="KW-0143">Chaperone</keyword>
<keyword id="KW-0963">Cytoplasm</keyword>
<keyword id="KW-0413">Isomerase</keyword>
<keyword id="KW-1185">Reference proteome</keyword>
<keyword id="KW-0697">Rotamase</keyword>
<comment type="function">
    <text evidence="1">Involved in protein export. Acts as a chaperone by maintaining the newly synthesized protein in an open conformation. Functions as a peptidyl-prolyl cis-trans isomerase.</text>
</comment>
<comment type="catalytic activity">
    <reaction evidence="1">
        <text>[protein]-peptidylproline (omega=180) = [protein]-peptidylproline (omega=0)</text>
        <dbReference type="Rhea" id="RHEA:16237"/>
        <dbReference type="Rhea" id="RHEA-COMP:10747"/>
        <dbReference type="Rhea" id="RHEA-COMP:10748"/>
        <dbReference type="ChEBI" id="CHEBI:83833"/>
        <dbReference type="ChEBI" id="CHEBI:83834"/>
        <dbReference type="EC" id="5.2.1.8"/>
    </reaction>
</comment>
<comment type="subcellular location">
    <subcellularLocation>
        <location>Cytoplasm</location>
    </subcellularLocation>
    <text evidence="1">About half TF is bound to the ribosome near the polypeptide exit tunnel while the other half is free in the cytoplasm.</text>
</comment>
<comment type="domain">
    <text evidence="1">Consists of 3 domains; the N-terminus binds the ribosome, the middle domain has PPIase activity, while the C-terminus has intrinsic chaperone activity on its own.</text>
</comment>
<comment type="similarity">
    <text evidence="1">Belongs to the FKBP-type PPIase family. Tig subfamily.</text>
</comment>
<proteinExistence type="inferred from homology"/>
<organism>
    <name type="scientific">Pectobacterium atrosepticum (strain SCRI 1043 / ATCC BAA-672)</name>
    <name type="common">Erwinia carotovora subsp. atroseptica</name>
    <dbReference type="NCBI Taxonomy" id="218491"/>
    <lineage>
        <taxon>Bacteria</taxon>
        <taxon>Pseudomonadati</taxon>
        <taxon>Pseudomonadota</taxon>
        <taxon>Gammaproteobacteria</taxon>
        <taxon>Enterobacterales</taxon>
        <taxon>Pectobacteriaceae</taxon>
        <taxon>Pectobacterium</taxon>
    </lineage>
</organism>
<reference key="1">
    <citation type="journal article" date="2004" name="Proc. Natl. Acad. Sci. U.S.A.">
        <title>Genome sequence of the enterobacterial phytopathogen Erwinia carotovora subsp. atroseptica and characterization of virulence factors.</title>
        <authorList>
            <person name="Bell K.S."/>
            <person name="Sebaihia M."/>
            <person name="Pritchard L."/>
            <person name="Holden M.T.G."/>
            <person name="Hyman L.J."/>
            <person name="Holeva M.C."/>
            <person name="Thomson N.R."/>
            <person name="Bentley S.D."/>
            <person name="Churcher L.J.C."/>
            <person name="Mungall K."/>
            <person name="Atkin R."/>
            <person name="Bason N."/>
            <person name="Brooks K."/>
            <person name="Chillingworth T."/>
            <person name="Clark K."/>
            <person name="Doggett J."/>
            <person name="Fraser A."/>
            <person name="Hance Z."/>
            <person name="Hauser H."/>
            <person name="Jagels K."/>
            <person name="Moule S."/>
            <person name="Norbertczak H."/>
            <person name="Ormond D."/>
            <person name="Price C."/>
            <person name="Quail M.A."/>
            <person name="Sanders M."/>
            <person name="Walker D."/>
            <person name="Whitehead S."/>
            <person name="Salmond G.P.C."/>
            <person name="Birch P.R.J."/>
            <person name="Parkhill J."/>
            <person name="Toth I.K."/>
        </authorList>
    </citation>
    <scope>NUCLEOTIDE SEQUENCE [LARGE SCALE GENOMIC DNA]</scope>
    <source>
        <strain>SCRI 1043 / ATCC BAA-672</strain>
    </source>
</reference>
<sequence>MQVSVETTQGLGRRVTITVAADIIESAVKSELVNAAKKVRIDGFRKGKVPMNVVAQRYGASVRQDVLGDLMQRNFVDAIIKEKINPVGAPNYTPGEYAVGGDFTYTVEFDVYPEVELKGLEAIEVEKPVVEVTDADVDTMLDTLRKQQATWKETDRAATAEDRATIDFTGSIDGEVFEGGKASDFVLAMGQSRMIPGFEDGIVGHKAGEEFTINVNFPEDYHAENLKGKAAQFVIVLKKVEERELPELTEEFIKRFGVADGSQEGLRAEVRKNMERELKGAVRNRVKTQVLDGLINANDIEVPVALIDGEIDVLRRQAAQRFGGNEKQALELPRELFEEQAKRRVVIGLLLGEVISSNELKADEARVNVLIEEMASAYEDPQEVIEFYSKNKELLNNMRNVALEEQAVETVLAKAKVVEKSVSFNELMNQTTTA</sequence>
<name>TIG_PECAS</name>